<protein>
    <recommendedName>
        <fullName evidence="1">LPS-assembly protein LptD</fullName>
    </recommendedName>
</protein>
<organism>
    <name type="scientific">Salmonella typhi</name>
    <dbReference type="NCBI Taxonomy" id="90370"/>
    <lineage>
        <taxon>Bacteria</taxon>
        <taxon>Pseudomonadati</taxon>
        <taxon>Pseudomonadota</taxon>
        <taxon>Gammaproteobacteria</taxon>
        <taxon>Enterobacterales</taxon>
        <taxon>Enterobacteriaceae</taxon>
        <taxon>Salmonella</taxon>
    </lineage>
</organism>
<name>LPTD_SALTI</name>
<comment type="function">
    <text evidence="1">Together with LptE, is involved in the assembly of lipopolysaccharide (LPS) at the surface of the outer membrane.</text>
</comment>
<comment type="subunit">
    <text evidence="1">Component of the lipopolysaccharide transport and assembly complex. Interacts with LptE and LptA.</text>
</comment>
<comment type="subcellular location">
    <subcellularLocation>
        <location evidence="1">Cell outer membrane</location>
    </subcellularLocation>
</comment>
<comment type="PTM">
    <text evidence="1">Contains two intramolecular disulfide bonds.</text>
</comment>
<comment type="similarity">
    <text evidence="1">Belongs to the LptD family.</text>
</comment>
<reference key="1">
    <citation type="journal article" date="2001" name="Nature">
        <title>Complete genome sequence of a multiple drug resistant Salmonella enterica serovar Typhi CT18.</title>
        <authorList>
            <person name="Parkhill J."/>
            <person name="Dougan G."/>
            <person name="James K.D."/>
            <person name="Thomson N.R."/>
            <person name="Pickard D."/>
            <person name="Wain J."/>
            <person name="Churcher C.M."/>
            <person name="Mungall K.L."/>
            <person name="Bentley S.D."/>
            <person name="Holden M.T.G."/>
            <person name="Sebaihia M."/>
            <person name="Baker S."/>
            <person name="Basham D."/>
            <person name="Brooks K."/>
            <person name="Chillingworth T."/>
            <person name="Connerton P."/>
            <person name="Cronin A."/>
            <person name="Davis P."/>
            <person name="Davies R.M."/>
            <person name="Dowd L."/>
            <person name="White N."/>
            <person name="Farrar J."/>
            <person name="Feltwell T."/>
            <person name="Hamlin N."/>
            <person name="Haque A."/>
            <person name="Hien T.T."/>
            <person name="Holroyd S."/>
            <person name="Jagels K."/>
            <person name="Krogh A."/>
            <person name="Larsen T.S."/>
            <person name="Leather S."/>
            <person name="Moule S."/>
            <person name="O'Gaora P."/>
            <person name="Parry C."/>
            <person name="Quail M.A."/>
            <person name="Rutherford K.M."/>
            <person name="Simmonds M."/>
            <person name="Skelton J."/>
            <person name="Stevens K."/>
            <person name="Whitehead S."/>
            <person name="Barrell B.G."/>
        </authorList>
    </citation>
    <scope>NUCLEOTIDE SEQUENCE [LARGE SCALE GENOMIC DNA]</scope>
    <source>
        <strain>CT18</strain>
    </source>
</reference>
<reference key="2">
    <citation type="journal article" date="2003" name="J. Bacteriol.">
        <title>Comparative genomics of Salmonella enterica serovar Typhi strains Ty2 and CT18.</title>
        <authorList>
            <person name="Deng W."/>
            <person name="Liou S.-R."/>
            <person name="Plunkett G. III"/>
            <person name="Mayhew G.F."/>
            <person name="Rose D.J."/>
            <person name="Burland V."/>
            <person name="Kodoyianni V."/>
            <person name="Schwartz D.C."/>
            <person name="Blattner F.R."/>
        </authorList>
    </citation>
    <scope>NUCLEOTIDE SEQUENCE [LARGE SCALE GENOMIC DNA]</scope>
    <source>
        <strain>ATCC 700931 / Ty2</strain>
    </source>
</reference>
<gene>
    <name evidence="1" type="primary">lptD</name>
    <name type="synonym">imp</name>
    <name type="synonym">ostA</name>
    <name type="ordered locus">STY0108</name>
    <name type="ordered locus">t0096</name>
</gene>
<feature type="signal peptide" evidence="1">
    <location>
        <begin position="1"/>
        <end position="24"/>
    </location>
</feature>
<feature type="chain" id="PRO_0000020288" description="LPS-assembly protein LptD">
    <location>
        <begin position="25"/>
        <end position="784"/>
    </location>
</feature>
<feature type="disulfide bond" evidence="1">
    <location>
        <begin position="31"/>
        <end position="724"/>
    </location>
</feature>
<feature type="disulfide bond" evidence="1">
    <location>
        <begin position="173"/>
        <end position="725"/>
    </location>
</feature>
<proteinExistence type="inferred from homology"/>
<accession>Q8Z9J6</accession>
<keyword id="KW-0998">Cell outer membrane</keyword>
<keyword id="KW-1015">Disulfide bond</keyword>
<keyword id="KW-0472">Membrane</keyword>
<keyword id="KW-0732">Signal</keyword>
<evidence type="ECO:0000255" key="1">
    <source>
        <dbReference type="HAMAP-Rule" id="MF_01411"/>
    </source>
</evidence>
<sequence>MKKRIPTLLATMIASALYSHQGLAADLASQCMLGVPSYDRPLVKGDTNDLPVTINADNAKGNYPDDAVFTGNVDIMQGNSRLQADEVQLHQKQAEGQPEPVRTVDALGNVHYDDNQVILKGPKGWANLNTKDTNVWEGDYQMVGRQGRGKADLMKQRGENRYTILENGSFTSCLPGSDTWSVVGSEVIHDREEQVAEIWNARFKVGPVPIFYSPYLQLPVGDKRRSGFLIPNAKYTTKNYFEFYLPYYWNIAPNMDATITPHYMHRRGNIMWENEFRYLTQAGAGLMELDYLPSDKVYEDEHPKEGDKHRWLFYWQHSGVMDQVWRFNVDYTKVSDSSYFNDFDSKYGSSTDGYATQKFSVGYAVQNFDATVSTKQFQVFNDQNTSSYSAEPQLDVNYYHNDLGPFDTRIYGQAVHFVNTKDNMPEATRVHLEPTISLPLSNRWGSLNTEAKLMATHYQQTNLDWYNANNSKKLEDSVNRVMPQFKVDGKLVFERDMAMLAPGYTQTLEPRVQYLYVPYRDQSGIYNYDSSLLQSDYNGLFRDRTYGGLDRIASANQVTTGVTTRIYDDAAVERFNVSVGQIYYFTESRTGDDNIKWENDDKTGSLVWAGDTYWRISERWGLRSGVQYDTRLDSVATSSSSLEYRRDQDRLVQLNYRYASPEYIQATLPSYYSTAEQYKNGINQVGAVASWPIADRWSIVGAYYFDTNSSKPADQMLGLQYNSCCYAIRVGYERKLNGWDNDKQHAIYDNAIGFNIELRGLSSNYGLGTQEMLRSNILPYQSSM</sequence>
<dbReference type="EMBL" id="AL513382">
    <property type="protein sequence ID" value="CAD01249.1"/>
    <property type="molecule type" value="Genomic_DNA"/>
</dbReference>
<dbReference type="EMBL" id="AE014613">
    <property type="protein sequence ID" value="AAO67829.1"/>
    <property type="molecule type" value="Genomic_DNA"/>
</dbReference>
<dbReference type="RefSeq" id="NP_454705.1">
    <property type="nucleotide sequence ID" value="NC_003198.1"/>
</dbReference>
<dbReference type="RefSeq" id="WP_000746124.1">
    <property type="nucleotide sequence ID" value="NZ_WSUR01000028.1"/>
</dbReference>
<dbReference type="SMR" id="Q8Z9J6"/>
<dbReference type="STRING" id="220341.gene:17584151"/>
<dbReference type="KEGG" id="stt:t0096"/>
<dbReference type="KEGG" id="sty:STY0108"/>
<dbReference type="PATRIC" id="fig|220341.7.peg.107"/>
<dbReference type="eggNOG" id="COG1452">
    <property type="taxonomic scope" value="Bacteria"/>
</dbReference>
<dbReference type="HOGENOM" id="CLU_009039_2_0_6"/>
<dbReference type="OMA" id="DYSHLDW"/>
<dbReference type="OrthoDB" id="9760225at2"/>
<dbReference type="Proteomes" id="UP000000541">
    <property type="component" value="Chromosome"/>
</dbReference>
<dbReference type="Proteomes" id="UP000002670">
    <property type="component" value="Chromosome"/>
</dbReference>
<dbReference type="GO" id="GO:0009279">
    <property type="term" value="C:cell outer membrane"/>
    <property type="evidence" value="ECO:0007669"/>
    <property type="project" value="UniProtKB-SubCell"/>
</dbReference>
<dbReference type="GO" id="GO:1990351">
    <property type="term" value="C:transporter complex"/>
    <property type="evidence" value="ECO:0007669"/>
    <property type="project" value="TreeGrafter"/>
</dbReference>
<dbReference type="GO" id="GO:0043165">
    <property type="term" value="P:Gram-negative-bacterium-type cell outer membrane assembly"/>
    <property type="evidence" value="ECO:0007669"/>
    <property type="project" value="UniProtKB-UniRule"/>
</dbReference>
<dbReference type="GO" id="GO:0015920">
    <property type="term" value="P:lipopolysaccharide transport"/>
    <property type="evidence" value="ECO:0007669"/>
    <property type="project" value="InterPro"/>
</dbReference>
<dbReference type="FunFam" id="2.60.450.10:FF:000003">
    <property type="entry name" value="LPS-assembly protein LptD"/>
    <property type="match status" value="1"/>
</dbReference>
<dbReference type="Gene3D" id="2.60.450.10">
    <property type="entry name" value="Lipopolysaccharide (LPS) transport protein A like domain"/>
    <property type="match status" value="1"/>
</dbReference>
<dbReference type="HAMAP" id="MF_01411">
    <property type="entry name" value="LPS_assembly_LptD"/>
    <property type="match status" value="1"/>
</dbReference>
<dbReference type="InterPro" id="IPR020889">
    <property type="entry name" value="LipoPS_assembly_LptD"/>
</dbReference>
<dbReference type="InterPro" id="IPR050218">
    <property type="entry name" value="LptD"/>
</dbReference>
<dbReference type="InterPro" id="IPR007543">
    <property type="entry name" value="LptD_C"/>
</dbReference>
<dbReference type="InterPro" id="IPR005653">
    <property type="entry name" value="OstA-like_N"/>
</dbReference>
<dbReference type="NCBIfam" id="NF002997">
    <property type="entry name" value="PRK03761.1"/>
    <property type="match status" value="1"/>
</dbReference>
<dbReference type="PANTHER" id="PTHR30189">
    <property type="entry name" value="LPS-ASSEMBLY PROTEIN"/>
    <property type="match status" value="1"/>
</dbReference>
<dbReference type="PANTHER" id="PTHR30189:SF1">
    <property type="entry name" value="LPS-ASSEMBLY PROTEIN LPTD"/>
    <property type="match status" value="1"/>
</dbReference>
<dbReference type="Pfam" id="PF04453">
    <property type="entry name" value="LptD"/>
    <property type="match status" value="1"/>
</dbReference>
<dbReference type="Pfam" id="PF03968">
    <property type="entry name" value="LptD_N"/>
    <property type="match status" value="1"/>
</dbReference>